<evidence type="ECO:0000255" key="1"/>
<evidence type="ECO:0000255" key="2">
    <source>
        <dbReference type="PROSITE-ProRule" id="PRU00777"/>
    </source>
</evidence>
<evidence type="ECO:0000305" key="3"/>
<gene>
    <name type="ordered locus">pXO2-42</name>
    <name type="ordered locus">BXB0045</name>
    <name type="ordered locus">GBAA_pXO2_0045</name>
</gene>
<geneLocation type="plasmid">
    <name>pXO2</name>
</geneLocation>
<accession>Q9RMZ0</accession>
<accession>Q8KYE8</accession>
<proteinExistence type="inferred from homology"/>
<reference key="1">
    <citation type="journal article" date="1999" name="J. Appl. Microbiol.">
        <title>Sequence, assembly and analysis of pXO1 and pXO2.</title>
        <authorList>
            <person name="Okinaka R.T."/>
            <person name="Cloud K."/>
            <person name="Hampton O."/>
            <person name="Hoffmaster A."/>
            <person name="Hill K.K."/>
            <person name="Keim P."/>
            <person name="Koehler T."/>
            <person name="Lamke G."/>
            <person name="Kumano S."/>
            <person name="Manter D."/>
            <person name="Martinez Y."/>
            <person name="Ricke D."/>
            <person name="Svensson R."/>
            <person name="Jackson P.J."/>
        </authorList>
    </citation>
    <scope>NUCLEOTIDE SEQUENCE [GENOMIC DNA]</scope>
    <source>
        <strain>Pasteur</strain>
    </source>
</reference>
<reference key="2">
    <citation type="journal article" date="2002" name="Science">
        <title>Comparative genome sequencing for discovery of novel polymorphisms in Bacillus anthracis.</title>
        <authorList>
            <person name="Read T.D."/>
            <person name="Salzberg S.L."/>
            <person name="Pop M."/>
            <person name="Shumway M.F."/>
            <person name="Umayam L."/>
            <person name="Jiang L."/>
            <person name="Holtzapple E."/>
            <person name="Busch J.D."/>
            <person name="Smith K.L."/>
            <person name="Schupp J.M."/>
            <person name="Solomon D."/>
            <person name="Keim P."/>
            <person name="Fraser C.M."/>
        </authorList>
    </citation>
    <scope>NUCLEOTIDE SEQUENCE [GENOMIC DNA]</scope>
    <source>
        <strain>Ames / isolate Florida / A2012</strain>
    </source>
</reference>
<reference key="3">
    <citation type="journal article" date="2009" name="J. Bacteriol.">
        <title>The complete genome sequence of Bacillus anthracis Ames 'Ancestor'.</title>
        <authorList>
            <person name="Ravel J."/>
            <person name="Jiang L."/>
            <person name="Stanley S.T."/>
            <person name="Wilson M.R."/>
            <person name="Decker R.S."/>
            <person name="Read T.D."/>
            <person name="Worsham P."/>
            <person name="Keim P.S."/>
            <person name="Salzberg S.L."/>
            <person name="Fraser-Liggett C.M."/>
            <person name="Rasko D.A."/>
        </authorList>
    </citation>
    <scope>NUCLEOTIDE SEQUENCE [LARGE SCALE GENOMIC DNA]</scope>
    <source>
        <strain>Ames ancestor</strain>
    </source>
</reference>
<protein>
    <recommendedName>
        <fullName>Uncharacterized cell wall amidase pXO2-42/BXB0045/GBAA_pXO2_0045</fullName>
        <ecNumber>3.5.1.-</ecNumber>
    </recommendedName>
</protein>
<name>Y6545_BACAN</name>
<sequence>MNTKGIIAKLTAGALIANLLICPANTLAEKKTFTDVPNWAQQSVNYLMKKALDGKPDGTFSPSEKIDRGSAAKLMAMVLGLQINKQAKPSFQDAKNHWASPYIAAVEKAGVIYGDGSGNFNPSKDIDRASMASMLVEAYKLNNRIIGDLPTQFEDLKGHWGAKLANALVALGISKGTGDGWKPNGIVTRAEAVQFIAQTDMKKADTSKRMYMNRHFITYHQPSLSSGVTSNQHAPQIIVVKEQRADGWIKIVTNIGDKWTPLYEKRETIHSTFTTYPEASHSSKVLGTHSPQTVTVIEEKGSWIRIRTNAGFQWLDKNQLTLPKKQNNFLEGKTIIIDPGHGGIDGGHKGIYMNESPVVYDTAVRVQKLFAQKTPFTALLTRDAYSRPGKNATDSLGKRVEFAKKNKGDIFVSIHANGFNGNAHGTETFYYKAPTQKSNPYVNDSRILAEKIQKRLITALQTRDRGVKIGNLYVLRENTMPSVLTELGFVDNKADGKKLDSPEWRQRAAEAIYAGILDYYEWKGHNMSAYY</sequence>
<dbReference type="EC" id="3.5.1.-"/>
<dbReference type="EMBL" id="AF188935">
    <property type="protein sequence ID" value="AAF13647.1"/>
    <property type="molecule type" value="Genomic_DNA"/>
</dbReference>
<dbReference type="EMBL" id="AE011191">
    <property type="protein sequence ID" value="AAM26204.1"/>
    <property type="molecule type" value="Genomic_DNA"/>
</dbReference>
<dbReference type="EMBL" id="AE017335">
    <property type="protein sequence ID" value="AAT28975.2"/>
    <property type="molecule type" value="Genomic_DNA"/>
</dbReference>
<dbReference type="RefSeq" id="NP_053197.1">
    <property type="nucleotide sequence ID" value="NC_002146.1"/>
</dbReference>
<dbReference type="RefSeq" id="WP_001092801.1">
    <property type="nucleotide sequence ID" value="NZ_VTZI01000012.1"/>
</dbReference>
<dbReference type="RefSeq" id="WP_010891437.1">
    <property type="nucleotide sequence ID" value="NZ_JBJYFI010000008.1"/>
</dbReference>
<dbReference type="SMR" id="Q9RMZ0"/>
<dbReference type="GeneID" id="45025353"/>
<dbReference type="KEGG" id="bar:GBAA_pXO2_0045"/>
<dbReference type="HOGENOM" id="CLU_029344_0_0_9"/>
<dbReference type="OMA" id="NDRGVKT"/>
<dbReference type="Proteomes" id="UP000000594">
    <property type="component" value="Plasmid pXO2"/>
</dbReference>
<dbReference type="GO" id="GO:0005576">
    <property type="term" value="C:extracellular region"/>
    <property type="evidence" value="ECO:0007669"/>
    <property type="project" value="UniProtKB-KW"/>
</dbReference>
<dbReference type="GO" id="GO:0030288">
    <property type="term" value="C:outer membrane-bounded periplasmic space"/>
    <property type="evidence" value="ECO:0007669"/>
    <property type="project" value="TreeGrafter"/>
</dbReference>
<dbReference type="GO" id="GO:0030115">
    <property type="term" value="C:S-layer"/>
    <property type="evidence" value="ECO:0007669"/>
    <property type="project" value="UniProtKB-SubCell"/>
</dbReference>
<dbReference type="GO" id="GO:0008745">
    <property type="term" value="F:N-acetylmuramoyl-L-alanine amidase activity"/>
    <property type="evidence" value="ECO:0007669"/>
    <property type="project" value="InterPro"/>
</dbReference>
<dbReference type="GO" id="GO:0009253">
    <property type="term" value="P:peptidoglycan catabolic process"/>
    <property type="evidence" value="ECO:0007669"/>
    <property type="project" value="InterPro"/>
</dbReference>
<dbReference type="CDD" id="cd02696">
    <property type="entry name" value="MurNAc-LAA"/>
    <property type="match status" value="1"/>
</dbReference>
<dbReference type="Gene3D" id="3.40.630.40">
    <property type="entry name" value="Zn-dependent exopeptidases"/>
    <property type="match status" value="1"/>
</dbReference>
<dbReference type="InterPro" id="IPR002508">
    <property type="entry name" value="MurNAc-LAA_cat"/>
</dbReference>
<dbReference type="InterPro" id="IPR050695">
    <property type="entry name" value="N-acetylmuramoyl_amidase_3"/>
</dbReference>
<dbReference type="InterPro" id="IPR001119">
    <property type="entry name" value="SLH_dom"/>
</dbReference>
<dbReference type="PANTHER" id="PTHR30404">
    <property type="entry name" value="N-ACETYLMURAMOYL-L-ALANINE AMIDASE"/>
    <property type="match status" value="1"/>
</dbReference>
<dbReference type="PANTHER" id="PTHR30404:SF0">
    <property type="entry name" value="N-ACETYLMURAMOYL-L-ALANINE AMIDASE AMIC"/>
    <property type="match status" value="1"/>
</dbReference>
<dbReference type="Pfam" id="PF01520">
    <property type="entry name" value="Amidase_3"/>
    <property type="match status" value="1"/>
</dbReference>
<dbReference type="Pfam" id="PF00395">
    <property type="entry name" value="SLH"/>
    <property type="match status" value="3"/>
</dbReference>
<dbReference type="SMART" id="SM00646">
    <property type="entry name" value="Ami_3"/>
    <property type="match status" value="1"/>
</dbReference>
<dbReference type="SUPFAM" id="SSF53187">
    <property type="entry name" value="Zn-dependent exopeptidases"/>
    <property type="match status" value="1"/>
</dbReference>
<dbReference type="PROSITE" id="PS51272">
    <property type="entry name" value="SLH"/>
    <property type="match status" value="3"/>
</dbReference>
<feature type="signal peptide" evidence="1">
    <location>
        <begin position="1"/>
        <end position="28"/>
    </location>
</feature>
<feature type="chain" id="PRO_0000006467" description="Uncharacterized cell wall amidase pXO2-42/BXB0045/GBAA_pXO2_0045">
    <location>
        <begin position="29"/>
        <end position="531"/>
    </location>
</feature>
<feature type="domain" description="SLH 1" evidence="2">
    <location>
        <begin position="29"/>
        <end position="85"/>
    </location>
</feature>
<feature type="domain" description="SLH 2" evidence="2">
    <location>
        <begin position="86"/>
        <end position="149"/>
    </location>
</feature>
<feature type="domain" description="SLH 3" evidence="2">
    <location>
        <begin position="150"/>
        <end position="210"/>
    </location>
</feature>
<feature type="domain" description="MurNAc-LAA" evidence="1">
    <location>
        <begin position="335"/>
        <end position="517"/>
    </location>
</feature>
<feature type="sequence variant" description="In strain: Pasteur.">
    <original>L</original>
    <variation>S</variation>
    <location>
        <position position="27"/>
    </location>
</feature>
<feature type="sequence variant" description="In strain: Pasteur.">
    <original>G</original>
    <variation>S</variation>
    <location>
        <position position="311"/>
    </location>
</feature>
<comment type="subcellular location">
    <subcellularLocation>
        <location evidence="3">Secreted</location>
        <location evidence="3">Cell wall</location>
        <location evidence="3">S-layer</location>
    </subcellularLocation>
</comment>
<comment type="similarity">
    <text evidence="3">In the C-terminal section; belongs to the N-acetylmuramoyl-L-alanine amidase 3 family.</text>
</comment>
<organism>
    <name type="scientific">Bacillus anthracis</name>
    <dbReference type="NCBI Taxonomy" id="1392"/>
    <lineage>
        <taxon>Bacteria</taxon>
        <taxon>Bacillati</taxon>
        <taxon>Bacillota</taxon>
        <taxon>Bacilli</taxon>
        <taxon>Bacillales</taxon>
        <taxon>Bacillaceae</taxon>
        <taxon>Bacillus</taxon>
        <taxon>Bacillus cereus group</taxon>
    </lineage>
</organism>
<keyword id="KW-0134">Cell wall</keyword>
<keyword id="KW-0378">Hydrolase</keyword>
<keyword id="KW-0614">Plasmid</keyword>
<keyword id="KW-1185">Reference proteome</keyword>
<keyword id="KW-0677">Repeat</keyword>
<keyword id="KW-0701">S-layer</keyword>
<keyword id="KW-0964">Secreted</keyword>
<keyword id="KW-0732">Signal</keyword>